<reference key="1">
    <citation type="journal article" date="2001" name="Proc. Natl. Acad. Sci. U.S.A.">
        <title>Complete genome sequence of Caulobacter crescentus.</title>
        <authorList>
            <person name="Nierman W.C."/>
            <person name="Feldblyum T.V."/>
            <person name="Laub M.T."/>
            <person name="Paulsen I.T."/>
            <person name="Nelson K.E."/>
            <person name="Eisen J.A."/>
            <person name="Heidelberg J.F."/>
            <person name="Alley M.R.K."/>
            <person name="Ohta N."/>
            <person name="Maddock J.R."/>
            <person name="Potocka I."/>
            <person name="Nelson W.C."/>
            <person name="Newton A."/>
            <person name="Stephens C."/>
            <person name="Phadke N.D."/>
            <person name="Ely B."/>
            <person name="DeBoy R.T."/>
            <person name="Dodson R.J."/>
            <person name="Durkin A.S."/>
            <person name="Gwinn M.L."/>
            <person name="Haft D.H."/>
            <person name="Kolonay J.F."/>
            <person name="Smit J."/>
            <person name="Craven M.B."/>
            <person name="Khouri H.M."/>
            <person name="Shetty J."/>
            <person name="Berry K.J."/>
            <person name="Utterback T.R."/>
            <person name="Tran K."/>
            <person name="Wolf A.M."/>
            <person name="Vamathevan J.J."/>
            <person name="Ermolaeva M.D."/>
            <person name="White O."/>
            <person name="Salzberg S.L."/>
            <person name="Venter J.C."/>
            <person name="Shapiro L."/>
            <person name="Fraser C.M."/>
        </authorList>
    </citation>
    <scope>NUCLEOTIDE SEQUENCE [LARGE SCALE GENOMIC DNA]</scope>
    <source>
        <strain>ATCC 19089 / CIP 103742 / CB 15</strain>
    </source>
</reference>
<reference key="2">
    <citation type="journal article" date="2005" name="Nucleic Acids Res.">
        <title>Toxin-antitoxin loci are highly abundant in free-living but lost from host-associated prokaryotes.</title>
        <authorList>
            <person name="Pandey D.P."/>
            <person name="Gerdes K."/>
        </authorList>
    </citation>
    <scope>POSSIBLE FUNCTION</scope>
    <source>
        <strain>ATCC 19089 / CIP 103742 / CB 15</strain>
    </source>
</reference>
<reference key="3">
    <citation type="journal article" date="2010" name="Mol. Microbiol.">
        <title>Interaction specificity, toxicity and regulation of a paralogous set of ParE/RelE-family toxin-antitoxin systems.</title>
        <authorList>
            <person name="Fiebig A."/>
            <person name="Castro Rojas C.M."/>
            <person name="Siegal-Gaskins D."/>
            <person name="Crosson S."/>
        </authorList>
    </citation>
    <scope>DISRUPTION PHENOTYPE</scope>
    <source>
        <strain>ATCC 19089 / CIP 103742 / CB 15</strain>
    </source>
</reference>
<gene>
    <name type="primary">parD2</name>
    <name type="ordered locus">CC_1054</name>
</gene>
<protein>
    <recommendedName>
        <fullName>Orphan antitoxin ParD2</fullName>
    </recommendedName>
</protein>
<accession>Q9A9D4</accession>
<proteinExistence type="predicted"/>
<organism>
    <name type="scientific">Caulobacter vibrioides (strain ATCC 19089 / CIP 103742 / CB 15)</name>
    <name type="common">Caulobacter crescentus</name>
    <dbReference type="NCBI Taxonomy" id="190650"/>
    <lineage>
        <taxon>Bacteria</taxon>
        <taxon>Pseudomonadati</taxon>
        <taxon>Pseudomonadota</taxon>
        <taxon>Alphaproteobacteria</taxon>
        <taxon>Caulobacterales</taxon>
        <taxon>Caulobacteraceae</taxon>
        <taxon>Caulobacter</taxon>
    </lineage>
</organism>
<keyword id="KW-1185">Reference proteome</keyword>
<keyword id="KW-1277">Toxin-antitoxin system</keyword>
<name>PARD2_CAUVC</name>
<sequence>MFWIFVMAKPASLSIELDSDLDRRLSEIAEGMDQPKTAIIERALRDFVELRDWQDAAIDEGLRAAEEGRVFDHDKVGEWIDSWGTPNERPMPSRD</sequence>
<evidence type="ECO:0000269" key="1">
    <source>
    </source>
</evidence>
<dbReference type="EMBL" id="AE005673">
    <property type="protein sequence ID" value="AAK23038.1"/>
    <property type="molecule type" value="Genomic_DNA"/>
</dbReference>
<dbReference type="PIR" id="B87380">
    <property type="entry name" value="B87380"/>
</dbReference>
<dbReference type="RefSeq" id="NP_419870.1">
    <property type="nucleotide sequence ID" value="NC_002696.2"/>
</dbReference>
<dbReference type="SMR" id="Q9A9D4"/>
<dbReference type="STRING" id="190650.CC_1054"/>
<dbReference type="EnsemblBacteria" id="AAK23038">
    <property type="protein sequence ID" value="AAK23038"/>
    <property type="gene ID" value="CC_1054"/>
</dbReference>
<dbReference type="KEGG" id="ccr:CC_1054"/>
<dbReference type="PATRIC" id="fig|190650.5.peg.1071"/>
<dbReference type="eggNOG" id="COG3905">
    <property type="taxonomic scope" value="Bacteria"/>
</dbReference>
<dbReference type="HOGENOM" id="CLU_155311_5_2_5"/>
<dbReference type="BioCyc" id="CAULO:CC1054-MONOMER"/>
<dbReference type="Proteomes" id="UP000001816">
    <property type="component" value="Chromosome"/>
</dbReference>
<dbReference type="GO" id="GO:0006355">
    <property type="term" value="P:regulation of DNA-templated transcription"/>
    <property type="evidence" value="ECO:0007669"/>
    <property type="project" value="InterPro"/>
</dbReference>
<dbReference type="GO" id="GO:0009432">
    <property type="term" value="P:SOS response"/>
    <property type="evidence" value="ECO:0000269"/>
    <property type="project" value="CollecTF"/>
</dbReference>
<dbReference type="CDD" id="cd22233">
    <property type="entry name" value="RHH_CopAso-like"/>
    <property type="match status" value="1"/>
</dbReference>
<dbReference type="InterPro" id="IPR002145">
    <property type="entry name" value="CopG"/>
</dbReference>
<dbReference type="InterPro" id="IPR052991">
    <property type="entry name" value="Non-func_TypeII_TA_Antitoxin"/>
</dbReference>
<dbReference type="PANTHER" id="PTHR40688">
    <property type="match status" value="1"/>
</dbReference>
<dbReference type="PANTHER" id="PTHR40688:SF2">
    <property type="entry name" value="RIBBON-HELIX-HELIX PROTEIN COPG DOMAIN-CONTAINING PROTEIN"/>
    <property type="match status" value="1"/>
</dbReference>
<dbReference type="Pfam" id="PF01402">
    <property type="entry name" value="RHH_1"/>
    <property type="match status" value="1"/>
</dbReference>
<comment type="function">
    <text>Antitoxin component of a non-functional type II toxin-antitoxin (TA system). Does not neutralize the effect of any of the RelE or ParE toxins.</text>
</comment>
<comment type="disruption phenotype">
    <text evidence="1">No visible phenotype; its associated toxin gene (parE2, not annotated in UniProtKB) is non-functional.</text>
</comment>
<feature type="chain" id="PRO_0000408462" description="Orphan antitoxin ParD2">
    <location>
        <begin position="1"/>
        <end position="95"/>
    </location>
</feature>